<sequence length="62" mass="6906">MDNRLLEILVCPLCKGTLQHDRAHNELICHVDKLAYPIRDGIPVMLADEARQTVEGTPVDPA</sequence>
<evidence type="ECO:0000255" key="1">
    <source>
        <dbReference type="HAMAP-Rule" id="MF_01187"/>
    </source>
</evidence>
<dbReference type="EMBL" id="AL646052">
    <property type="protein sequence ID" value="CAD16238.1"/>
    <property type="molecule type" value="Genomic_DNA"/>
</dbReference>
<dbReference type="RefSeq" id="WP_003266270.1">
    <property type="nucleotide sequence ID" value="NC_003295.1"/>
</dbReference>
<dbReference type="SMR" id="Q8XWE3"/>
<dbReference type="STRING" id="267608.RSc2531"/>
<dbReference type="DNASU" id="1221378"/>
<dbReference type="EnsemblBacteria" id="CAD16238">
    <property type="protein sequence ID" value="CAD16238"/>
    <property type="gene ID" value="RSc2531"/>
</dbReference>
<dbReference type="KEGG" id="rso:RSc2531"/>
<dbReference type="eggNOG" id="COG2835">
    <property type="taxonomic scope" value="Bacteria"/>
</dbReference>
<dbReference type="HOGENOM" id="CLU_155659_3_0_4"/>
<dbReference type="Proteomes" id="UP000001436">
    <property type="component" value="Chromosome"/>
</dbReference>
<dbReference type="GO" id="GO:0005829">
    <property type="term" value="C:cytosol"/>
    <property type="evidence" value="ECO:0007669"/>
    <property type="project" value="TreeGrafter"/>
</dbReference>
<dbReference type="FunFam" id="2.20.25.10:FF:000002">
    <property type="entry name" value="UPF0434 protein YcaR"/>
    <property type="match status" value="1"/>
</dbReference>
<dbReference type="Gene3D" id="2.20.25.10">
    <property type="match status" value="1"/>
</dbReference>
<dbReference type="HAMAP" id="MF_01187">
    <property type="entry name" value="UPF0434"/>
    <property type="match status" value="1"/>
</dbReference>
<dbReference type="InterPro" id="IPR005651">
    <property type="entry name" value="Trm112-like"/>
</dbReference>
<dbReference type="PANTHER" id="PTHR33505:SF4">
    <property type="entry name" value="PROTEIN PREY, MITOCHONDRIAL"/>
    <property type="match status" value="1"/>
</dbReference>
<dbReference type="PANTHER" id="PTHR33505">
    <property type="entry name" value="ZGC:162634"/>
    <property type="match status" value="1"/>
</dbReference>
<dbReference type="Pfam" id="PF03966">
    <property type="entry name" value="Trm112p"/>
    <property type="match status" value="1"/>
</dbReference>
<dbReference type="SUPFAM" id="SSF158997">
    <property type="entry name" value="Trm112p-like"/>
    <property type="match status" value="1"/>
</dbReference>
<keyword id="KW-1185">Reference proteome</keyword>
<protein>
    <recommendedName>
        <fullName evidence="1">UPF0434 protein RSc2531</fullName>
    </recommendedName>
</protein>
<proteinExistence type="inferred from homology"/>
<organism>
    <name type="scientific">Ralstonia nicotianae (strain ATCC BAA-1114 / GMI1000)</name>
    <name type="common">Ralstonia solanacearum</name>
    <dbReference type="NCBI Taxonomy" id="267608"/>
    <lineage>
        <taxon>Bacteria</taxon>
        <taxon>Pseudomonadati</taxon>
        <taxon>Pseudomonadota</taxon>
        <taxon>Betaproteobacteria</taxon>
        <taxon>Burkholderiales</taxon>
        <taxon>Burkholderiaceae</taxon>
        <taxon>Ralstonia</taxon>
        <taxon>Ralstonia solanacearum species complex</taxon>
    </lineage>
</organism>
<name>Y2531_RALN1</name>
<accession>Q8XWE3</accession>
<feature type="chain" id="PRO_0000291143" description="UPF0434 protein RSc2531">
    <location>
        <begin position="1"/>
        <end position="62"/>
    </location>
</feature>
<reference key="1">
    <citation type="journal article" date="2002" name="Nature">
        <title>Genome sequence of the plant pathogen Ralstonia solanacearum.</title>
        <authorList>
            <person name="Salanoubat M."/>
            <person name="Genin S."/>
            <person name="Artiguenave F."/>
            <person name="Gouzy J."/>
            <person name="Mangenot S."/>
            <person name="Arlat M."/>
            <person name="Billault A."/>
            <person name="Brottier P."/>
            <person name="Camus J.-C."/>
            <person name="Cattolico L."/>
            <person name="Chandler M."/>
            <person name="Choisne N."/>
            <person name="Claudel-Renard C."/>
            <person name="Cunnac S."/>
            <person name="Demange N."/>
            <person name="Gaspin C."/>
            <person name="Lavie M."/>
            <person name="Moisan A."/>
            <person name="Robert C."/>
            <person name="Saurin W."/>
            <person name="Schiex T."/>
            <person name="Siguier P."/>
            <person name="Thebault P."/>
            <person name="Whalen M."/>
            <person name="Wincker P."/>
            <person name="Levy M."/>
            <person name="Weissenbach J."/>
            <person name="Boucher C.A."/>
        </authorList>
    </citation>
    <scope>NUCLEOTIDE SEQUENCE [LARGE SCALE GENOMIC DNA]</scope>
    <source>
        <strain>ATCC BAA-1114 / GMI1000</strain>
    </source>
</reference>
<comment type="similarity">
    <text evidence="1">Belongs to the UPF0434 family.</text>
</comment>
<gene>
    <name type="ordered locus">RSc2531</name>
</gene>